<gene>
    <name evidence="1" type="primary">ribL</name>
    <name type="ordered locus">Mbur_0427</name>
</gene>
<name>RIBL_METBU</name>
<organism>
    <name type="scientific">Methanococcoides burtonii (strain DSM 6242 / NBRC 107633 / OCM 468 / ACE-M)</name>
    <dbReference type="NCBI Taxonomy" id="259564"/>
    <lineage>
        <taxon>Archaea</taxon>
        <taxon>Methanobacteriati</taxon>
        <taxon>Methanobacteriota</taxon>
        <taxon>Stenosarchaea group</taxon>
        <taxon>Methanomicrobia</taxon>
        <taxon>Methanosarcinales</taxon>
        <taxon>Methanosarcinaceae</taxon>
        <taxon>Methanococcoides</taxon>
    </lineage>
</organism>
<reference key="1">
    <citation type="journal article" date="2009" name="ISME J.">
        <title>The genome sequence of the psychrophilic archaeon, Methanococcoides burtonii: the role of genome evolution in cold adaptation.</title>
        <authorList>
            <person name="Allen M.A."/>
            <person name="Lauro F.M."/>
            <person name="Williams T.J."/>
            <person name="Burg D."/>
            <person name="Siddiqui K.S."/>
            <person name="De Francisci D."/>
            <person name="Chong K.W."/>
            <person name="Pilak O."/>
            <person name="Chew H.H."/>
            <person name="De Maere M.Z."/>
            <person name="Ting L."/>
            <person name="Katrib M."/>
            <person name="Ng C."/>
            <person name="Sowers K.R."/>
            <person name="Galperin M.Y."/>
            <person name="Anderson I.J."/>
            <person name="Ivanova N."/>
            <person name="Dalin E."/>
            <person name="Martinez M."/>
            <person name="Lapidus A."/>
            <person name="Hauser L."/>
            <person name="Land M."/>
            <person name="Thomas T."/>
            <person name="Cavicchioli R."/>
        </authorList>
    </citation>
    <scope>NUCLEOTIDE SEQUENCE [LARGE SCALE GENOMIC DNA]</scope>
    <source>
        <strain>DSM 6242 / NBRC 107633 / OCM 468 / ACE-M</strain>
    </source>
</reference>
<evidence type="ECO:0000255" key="1">
    <source>
        <dbReference type="HAMAP-Rule" id="MF_02115"/>
    </source>
</evidence>
<protein>
    <recommendedName>
        <fullName evidence="1">FAD synthase</fullName>
        <ecNumber evidence="1">2.7.7.2</ecNumber>
    </recommendedName>
    <alternativeName>
        <fullName evidence="1">FMN adenylyltransferase</fullName>
    </alternativeName>
    <alternativeName>
        <fullName evidence="1">Flavin adenine dinucleotide synthase</fullName>
    </alternativeName>
</protein>
<comment type="function">
    <text evidence="1">Catalyzes the transfer of the AMP portion of ATP to flavin mononucleotide (FMN) to produce flavin adenine dinucleotide (FAD) coenzyme.</text>
</comment>
<comment type="catalytic activity">
    <reaction evidence="1">
        <text>FMN + ATP + H(+) = FAD + diphosphate</text>
        <dbReference type="Rhea" id="RHEA:17237"/>
        <dbReference type="ChEBI" id="CHEBI:15378"/>
        <dbReference type="ChEBI" id="CHEBI:30616"/>
        <dbReference type="ChEBI" id="CHEBI:33019"/>
        <dbReference type="ChEBI" id="CHEBI:57692"/>
        <dbReference type="ChEBI" id="CHEBI:58210"/>
        <dbReference type="EC" id="2.7.7.2"/>
    </reaction>
</comment>
<comment type="cofactor">
    <cofactor evidence="1">
        <name>a divalent metal cation</name>
        <dbReference type="ChEBI" id="CHEBI:60240"/>
    </cofactor>
</comment>
<comment type="pathway">
    <text evidence="1">Cofactor biosynthesis; FAD biosynthesis; FAD from FMN: step 1/1.</text>
</comment>
<comment type="subunit">
    <text evidence="1">Homodimer.</text>
</comment>
<comment type="similarity">
    <text evidence="1">Belongs to the archaeal FAD synthase family.</text>
</comment>
<proteinExistence type="inferred from homology"/>
<keyword id="KW-0067">ATP-binding</keyword>
<keyword id="KW-0274">FAD</keyword>
<keyword id="KW-0285">Flavoprotein</keyword>
<keyword id="KW-0288">FMN</keyword>
<keyword id="KW-0547">Nucleotide-binding</keyword>
<keyword id="KW-0548">Nucleotidyltransferase</keyword>
<keyword id="KW-0808">Transferase</keyword>
<dbReference type="EC" id="2.7.7.2" evidence="1"/>
<dbReference type="EMBL" id="CP000300">
    <property type="protein sequence ID" value="ABE51415.1"/>
    <property type="molecule type" value="Genomic_DNA"/>
</dbReference>
<dbReference type="RefSeq" id="WP_011498577.1">
    <property type="nucleotide sequence ID" value="NC_007955.1"/>
</dbReference>
<dbReference type="SMR" id="Q12YR1"/>
<dbReference type="STRING" id="259564.Mbur_0427"/>
<dbReference type="GeneID" id="3996820"/>
<dbReference type="KEGG" id="mbu:Mbur_0427"/>
<dbReference type="HOGENOM" id="CLU_034585_2_1_2"/>
<dbReference type="OrthoDB" id="1912at2157"/>
<dbReference type="UniPathway" id="UPA00277">
    <property type="reaction ID" value="UER00407"/>
</dbReference>
<dbReference type="Proteomes" id="UP000001979">
    <property type="component" value="Chromosome"/>
</dbReference>
<dbReference type="GO" id="GO:0005524">
    <property type="term" value="F:ATP binding"/>
    <property type="evidence" value="ECO:0007669"/>
    <property type="project" value="UniProtKB-UniRule"/>
</dbReference>
<dbReference type="GO" id="GO:0003919">
    <property type="term" value="F:FMN adenylyltransferase activity"/>
    <property type="evidence" value="ECO:0007669"/>
    <property type="project" value="UniProtKB-UniRule"/>
</dbReference>
<dbReference type="GO" id="GO:0006747">
    <property type="term" value="P:FAD biosynthetic process"/>
    <property type="evidence" value="ECO:0007669"/>
    <property type="project" value="UniProtKB-UniRule"/>
</dbReference>
<dbReference type="GO" id="GO:0046444">
    <property type="term" value="P:FMN metabolic process"/>
    <property type="evidence" value="ECO:0007669"/>
    <property type="project" value="UniProtKB-UniRule"/>
</dbReference>
<dbReference type="Gene3D" id="3.40.50.620">
    <property type="entry name" value="HUPs"/>
    <property type="match status" value="1"/>
</dbReference>
<dbReference type="HAMAP" id="MF_02115">
    <property type="entry name" value="FAD_synth_arch"/>
    <property type="match status" value="1"/>
</dbReference>
<dbReference type="InterPro" id="IPR050385">
    <property type="entry name" value="Archaeal_FAD_synthase"/>
</dbReference>
<dbReference type="InterPro" id="IPR004821">
    <property type="entry name" value="Cyt_trans-like"/>
</dbReference>
<dbReference type="InterPro" id="IPR024902">
    <property type="entry name" value="FAD_synth_RibL"/>
</dbReference>
<dbReference type="InterPro" id="IPR014729">
    <property type="entry name" value="Rossmann-like_a/b/a_fold"/>
</dbReference>
<dbReference type="NCBIfam" id="TIGR00125">
    <property type="entry name" value="cyt_tran_rel"/>
    <property type="match status" value="1"/>
</dbReference>
<dbReference type="PANTHER" id="PTHR43793">
    <property type="entry name" value="FAD SYNTHASE"/>
    <property type="match status" value="1"/>
</dbReference>
<dbReference type="PANTHER" id="PTHR43793:SF1">
    <property type="entry name" value="FAD SYNTHASE"/>
    <property type="match status" value="1"/>
</dbReference>
<dbReference type="Pfam" id="PF01467">
    <property type="entry name" value="CTP_transf_like"/>
    <property type="match status" value="1"/>
</dbReference>
<dbReference type="SUPFAM" id="SSF52374">
    <property type="entry name" value="Nucleotidylyl transferase"/>
    <property type="match status" value="1"/>
</dbReference>
<sequence>MTRVLATGTFDLLHPGHVFFLRQARSFGDELYVLVARDSMIKHKAQPIVPEGQRLKMISAFGVVDKALLGSESDIFEPLKEINPDIIVLGHDQFFDTGELEKNLGERGFKAKVVRIDDAMKCELCSSGRIIKRVLERYGQNEE</sequence>
<feature type="chain" id="PRO_0000406252" description="FAD synthase">
    <location>
        <begin position="1"/>
        <end position="143"/>
    </location>
</feature>
<feature type="binding site" evidence="1">
    <location>
        <begin position="9"/>
        <end position="10"/>
    </location>
    <ligand>
        <name>ATP</name>
        <dbReference type="ChEBI" id="CHEBI:30616"/>
    </ligand>
</feature>
<feature type="binding site" evidence="1">
    <location>
        <begin position="14"/>
        <end position="17"/>
    </location>
    <ligand>
        <name>ATP</name>
        <dbReference type="ChEBI" id="CHEBI:30616"/>
    </ligand>
</feature>
<feature type="binding site" evidence="1">
    <location>
        <position position="92"/>
    </location>
    <ligand>
        <name>ATP</name>
        <dbReference type="ChEBI" id="CHEBI:30616"/>
    </ligand>
</feature>
<accession>Q12YR1</accession>